<comment type="function">
    <text evidence="1">Catalyzes the oxidation of either pyridoxine 5'-phosphate (PNP) or pyridoxamine 5'-phosphate (PMP) into pyridoxal 5'-phosphate (PLP).</text>
</comment>
<comment type="catalytic activity">
    <reaction evidence="1">
        <text>pyridoxamine 5'-phosphate + O2 + H2O = pyridoxal 5'-phosphate + H2O2 + NH4(+)</text>
        <dbReference type="Rhea" id="RHEA:15817"/>
        <dbReference type="ChEBI" id="CHEBI:15377"/>
        <dbReference type="ChEBI" id="CHEBI:15379"/>
        <dbReference type="ChEBI" id="CHEBI:16240"/>
        <dbReference type="ChEBI" id="CHEBI:28938"/>
        <dbReference type="ChEBI" id="CHEBI:58451"/>
        <dbReference type="ChEBI" id="CHEBI:597326"/>
        <dbReference type="EC" id="1.4.3.5"/>
    </reaction>
</comment>
<comment type="catalytic activity">
    <reaction evidence="1">
        <text>pyridoxine 5'-phosphate + O2 = pyridoxal 5'-phosphate + H2O2</text>
        <dbReference type="Rhea" id="RHEA:15149"/>
        <dbReference type="ChEBI" id="CHEBI:15379"/>
        <dbReference type="ChEBI" id="CHEBI:16240"/>
        <dbReference type="ChEBI" id="CHEBI:58589"/>
        <dbReference type="ChEBI" id="CHEBI:597326"/>
        <dbReference type="EC" id="1.4.3.5"/>
    </reaction>
</comment>
<comment type="cofactor">
    <cofactor evidence="1">
        <name>FMN</name>
        <dbReference type="ChEBI" id="CHEBI:58210"/>
    </cofactor>
    <text evidence="1">Binds 1 FMN per subunit.</text>
</comment>
<comment type="pathway">
    <text evidence="1">Cofactor metabolism; pyridoxal 5'-phosphate salvage; pyridoxal 5'-phosphate from pyridoxamine 5'-phosphate: step 1/1.</text>
</comment>
<comment type="pathway">
    <text evidence="1">Cofactor metabolism; pyridoxal 5'-phosphate salvage; pyridoxal 5'-phosphate from pyridoxine 5'-phosphate: step 1/1.</text>
</comment>
<comment type="subunit">
    <text evidence="1">Homodimer.</text>
</comment>
<comment type="similarity">
    <text evidence="1">Belongs to the pyridoxamine 5'-phosphate oxidase family.</text>
</comment>
<proteinExistence type="inferred from homology"/>
<protein>
    <recommendedName>
        <fullName evidence="1">Pyridoxine/pyridoxamine 5'-phosphate oxidase</fullName>
        <ecNumber evidence="1">1.4.3.5</ecNumber>
    </recommendedName>
    <alternativeName>
        <fullName evidence="1">PNP/PMP oxidase</fullName>
        <shortName evidence="1">PNPOx</shortName>
    </alternativeName>
    <alternativeName>
        <fullName evidence="1">Pyridoxal 5'-phosphate synthase</fullName>
    </alternativeName>
</protein>
<accession>C3LWZ1</accession>
<feature type="chain" id="PRO_1000186344" description="Pyridoxine/pyridoxamine 5'-phosphate oxidase">
    <location>
        <begin position="1"/>
        <end position="211"/>
    </location>
</feature>
<feature type="binding site" evidence="1">
    <location>
        <begin position="7"/>
        <end position="10"/>
    </location>
    <ligand>
        <name>substrate</name>
    </ligand>
</feature>
<feature type="binding site" evidence="1">
    <location>
        <begin position="60"/>
        <end position="65"/>
    </location>
    <ligand>
        <name>FMN</name>
        <dbReference type="ChEBI" id="CHEBI:58210"/>
    </ligand>
</feature>
<feature type="binding site" evidence="1">
    <location>
        <position position="65"/>
    </location>
    <ligand>
        <name>substrate</name>
    </ligand>
</feature>
<feature type="binding site" evidence="1">
    <location>
        <begin position="75"/>
        <end position="76"/>
    </location>
    <ligand>
        <name>FMN</name>
        <dbReference type="ChEBI" id="CHEBI:58210"/>
    </ligand>
</feature>
<feature type="binding site" evidence="1">
    <location>
        <position position="81"/>
    </location>
    <ligand>
        <name>FMN</name>
        <dbReference type="ChEBI" id="CHEBI:58210"/>
    </ligand>
</feature>
<feature type="binding site" evidence="1">
    <location>
        <position position="82"/>
    </location>
    <ligand>
        <name>FMN</name>
        <dbReference type="ChEBI" id="CHEBI:58210"/>
    </ligand>
</feature>
<feature type="binding site" evidence="1">
    <location>
        <position position="104"/>
    </location>
    <ligand>
        <name>FMN</name>
        <dbReference type="ChEBI" id="CHEBI:58210"/>
    </ligand>
</feature>
<feature type="binding site" evidence="1">
    <location>
        <position position="122"/>
    </location>
    <ligand>
        <name>substrate</name>
    </ligand>
</feature>
<feature type="binding site" evidence="1">
    <location>
        <position position="126"/>
    </location>
    <ligand>
        <name>substrate</name>
    </ligand>
</feature>
<feature type="binding site" evidence="1">
    <location>
        <position position="130"/>
    </location>
    <ligand>
        <name>substrate</name>
    </ligand>
</feature>
<feature type="binding site" evidence="1">
    <location>
        <begin position="139"/>
        <end position="140"/>
    </location>
    <ligand>
        <name>FMN</name>
        <dbReference type="ChEBI" id="CHEBI:58210"/>
    </ligand>
</feature>
<feature type="binding site" evidence="1">
    <location>
        <position position="184"/>
    </location>
    <ligand>
        <name>FMN</name>
        <dbReference type="ChEBI" id="CHEBI:58210"/>
    </ligand>
</feature>
<feature type="binding site" evidence="1">
    <location>
        <begin position="190"/>
        <end position="192"/>
    </location>
    <ligand>
        <name>substrate</name>
    </ligand>
</feature>
<feature type="binding site" evidence="1">
    <location>
        <position position="194"/>
    </location>
    <ligand>
        <name>FMN</name>
        <dbReference type="ChEBI" id="CHEBI:58210"/>
    </ligand>
</feature>
<evidence type="ECO:0000255" key="1">
    <source>
        <dbReference type="HAMAP-Rule" id="MF_01629"/>
    </source>
</evidence>
<organism>
    <name type="scientific">Vibrio cholerae serotype O1 (strain M66-2)</name>
    <dbReference type="NCBI Taxonomy" id="579112"/>
    <lineage>
        <taxon>Bacteria</taxon>
        <taxon>Pseudomonadati</taxon>
        <taxon>Pseudomonadota</taxon>
        <taxon>Gammaproteobacteria</taxon>
        <taxon>Vibrionales</taxon>
        <taxon>Vibrionaceae</taxon>
        <taxon>Vibrio</taxon>
    </lineage>
</organism>
<sequence>MDLSDIRREYIHGGLRRKDLQANPIDQFNLWLQQAIDANLSDPTAMTVATVDEHGQPFQRIVLLKNVDDAGFVFYTNLGSRKAQHIAHNNKISLHFPWHPLERQVHITGVAEKLTAMENMKYFMSRPKESQIAAIASHQSSRISARGVLEGKYLELKQKFANGEIPVPSFWGGYRIRPESLEFWQGGEHRLHDRFLYSRQDDNWTVDRLAP</sequence>
<name>PDXH_VIBCM</name>
<reference key="1">
    <citation type="journal article" date="2008" name="PLoS ONE">
        <title>A recalibrated molecular clock and independent origins for the cholera pandemic clones.</title>
        <authorList>
            <person name="Feng L."/>
            <person name="Reeves P.R."/>
            <person name="Lan R."/>
            <person name="Ren Y."/>
            <person name="Gao C."/>
            <person name="Zhou Z."/>
            <person name="Ren Y."/>
            <person name="Cheng J."/>
            <person name="Wang W."/>
            <person name="Wang J."/>
            <person name="Qian W."/>
            <person name="Li D."/>
            <person name="Wang L."/>
        </authorList>
    </citation>
    <scope>NUCLEOTIDE SEQUENCE [LARGE SCALE GENOMIC DNA]</scope>
    <source>
        <strain>M66-2</strain>
    </source>
</reference>
<dbReference type="EC" id="1.4.3.5" evidence="1"/>
<dbReference type="EMBL" id="CP001234">
    <property type="protein sequence ID" value="ACP07996.1"/>
    <property type="molecule type" value="Genomic_DNA"/>
</dbReference>
<dbReference type="RefSeq" id="WP_000365910.1">
    <property type="nucleotide sequence ID" value="NC_012580.1"/>
</dbReference>
<dbReference type="SMR" id="C3LWZ1"/>
<dbReference type="GeneID" id="89512053"/>
<dbReference type="KEGG" id="vcm:VCM66_A1037"/>
<dbReference type="HOGENOM" id="CLU_032263_2_2_6"/>
<dbReference type="UniPathway" id="UPA01068">
    <property type="reaction ID" value="UER00304"/>
</dbReference>
<dbReference type="UniPathway" id="UPA01068">
    <property type="reaction ID" value="UER00305"/>
</dbReference>
<dbReference type="Proteomes" id="UP000001217">
    <property type="component" value="Chromosome II"/>
</dbReference>
<dbReference type="GO" id="GO:0010181">
    <property type="term" value="F:FMN binding"/>
    <property type="evidence" value="ECO:0007669"/>
    <property type="project" value="UniProtKB-UniRule"/>
</dbReference>
<dbReference type="GO" id="GO:0004733">
    <property type="term" value="F:pyridoxamine phosphate oxidase activity"/>
    <property type="evidence" value="ECO:0007669"/>
    <property type="project" value="UniProtKB-UniRule"/>
</dbReference>
<dbReference type="GO" id="GO:0008615">
    <property type="term" value="P:pyridoxine biosynthetic process"/>
    <property type="evidence" value="ECO:0007669"/>
    <property type="project" value="UniProtKB-KW"/>
</dbReference>
<dbReference type="FunFam" id="2.30.110.10:FF:000001">
    <property type="entry name" value="Pyridoxine/pyridoxamine 5'-phosphate oxidase"/>
    <property type="match status" value="1"/>
</dbReference>
<dbReference type="Gene3D" id="2.30.110.10">
    <property type="entry name" value="Electron Transport, Fmn-binding Protein, Chain A"/>
    <property type="match status" value="1"/>
</dbReference>
<dbReference type="HAMAP" id="MF_01629">
    <property type="entry name" value="PdxH"/>
    <property type="match status" value="1"/>
</dbReference>
<dbReference type="InterPro" id="IPR000659">
    <property type="entry name" value="Pyridox_Oxase"/>
</dbReference>
<dbReference type="InterPro" id="IPR019740">
    <property type="entry name" value="Pyridox_Oxase_CS"/>
</dbReference>
<dbReference type="InterPro" id="IPR011576">
    <property type="entry name" value="Pyridox_Oxase_N"/>
</dbReference>
<dbReference type="InterPro" id="IPR019576">
    <property type="entry name" value="Pyridoxamine_oxidase_dimer_C"/>
</dbReference>
<dbReference type="InterPro" id="IPR012349">
    <property type="entry name" value="Split_barrel_FMN-bd"/>
</dbReference>
<dbReference type="NCBIfam" id="TIGR00558">
    <property type="entry name" value="pdxH"/>
    <property type="match status" value="1"/>
</dbReference>
<dbReference type="NCBIfam" id="NF004231">
    <property type="entry name" value="PRK05679.1"/>
    <property type="match status" value="1"/>
</dbReference>
<dbReference type="PANTHER" id="PTHR10851:SF0">
    <property type="entry name" value="PYRIDOXINE-5'-PHOSPHATE OXIDASE"/>
    <property type="match status" value="1"/>
</dbReference>
<dbReference type="PANTHER" id="PTHR10851">
    <property type="entry name" value="PYRIDOXINE-5-PHOSPHATE OXIDASE"/>
    <property type="match status" value="1"/>
</dbReference>
<dbReference type="Pfam" id="PF10590">
    <property type="entry name" value="PNP_phzG_C"/>
    <property type="match status" value="1"/>
</dbReference>
<dbReference type="Pfam" id="PF01243">
    <property type="entry name" value="PNPOx_N"/>
    <property type="match status" value="1"/>
</dbReference>
<dbReference type="PIRSF" id="PIRSF000190">
    <property type="entry name" value="Pyd_amn-ph_oxd"/>
    <property type="match status" value="1"/>
</dbReference>
<dbReference type="SUPFAM" id="SSF50475">
    <property type="entry name" value="FMN-binding split barrel"/>
    <property type="match status" value="1"/>
</dbReference>
<dbReference type="PROSITE" id="PS01064">
    <property type="entry name" value="PYRIDOX_OXIDASE"/>
    <property type="match status" value="1"/>
</dbReference>
<keyword id="KW-0285">Flavoprotein</keyword>
<keyword id="KW-0288">FMN</keyword>
<keyword id="KW-0560">Oxidoreductase</keyword>
<keyword id="KW-0664">Pyridoxine biosynthesis</keyword>
<gene>
    <name evidence="1" type="primary">pdxH</name>
    <name type="ordered locus">VCM66_A1037</name>
</gene>